<accession>O50290</accession>
<comment type="function">
    <text evidence="1">Produces ATP from ADP in the presence of a proton gradient across the membrane. The catalytic sites are hosted primarily by the beta subunits.</text>
</comment>
<comment type="catalytic activity">
    <reaction evidence="1">
        <text>ATP + H2O + 4 H(+)(in) = ADP + phosphate + 5 H(+)(out)</text>
        <dbReference type="Rhea" id="RHEA:57720"/>
        <dbReference type="ChEBI" id="CHEBI:15377"/>
        <dbReference type="ChEBI" id="CHEBI:15378"/>
        <dbReference type="ChEBI" id="CHEBI:30616"/>
        <dbReference type="ChEBI" id="CHEBI:43474"/>
        <dbReference type="ChEBI" id="CHEBI:456216"/>
        <dbReference type="EC" id="7.1.2.2"/>
    </reaction>
</comment>
<comment type="subunit">
    <text evidence="1">F-type ATPases have 2 components, CF(1) - the catalytic core - and CF(0) - the membrane proton channel. CF(1) has five subunits: alpha(3), beta(3), gamma(1), delta(1), epsilon(1). CF(0) has three main subunits: a(1), b(2) and c(9-12). The alpha and beta chains form an alternating ring which encloses part of the gamma chain. CF(1) is attached to CF(0) by a central stalk formed by the gamma and epsilon chains, while a peripheral stalk is formed by the delta and b chains.</text>
</comment>
<comment type="subcellular location">
    <subcellularLocation>
        <location evidence="1">Cell inner membrane</location>
        <topology evidence="1">Peripheral membrane protein</topology>
    </subcellularLocation>
</comment>
<comment type="similarity">
    <text evidence="1">Belongs to the ATPase alpha/beta chains family.</text>
</comment>
<proteinExistence type="inferred from homology"/>
<evidence type="ECO:0000255" key="1">
    <source>
        <dbReference type="HAMAP-Rule" id="MF_01347"/>
    </source>
</evidence>
<reference key="1">
    <citation type="journal article" date="1998" name="Nature">
        <title>The genome sequence of Rickettsia prowazekii and the origin of mitochondria.</title>
        <authorList>
            <person name="Andersson S.G.E."/>
            <person name="Zomorodipour A."/>
            <person name="Andersson J.O."/>
            <person name="Sicheritz-Ponten T."/>
            <person name="Alsmark U.C.M."/>
            <person name="Podowski R.M."/>
            <person name="Naeslund A.K."/>
            <person name="Eriksson A.-S."/>
            <person name="Winkler H.H."/>
            <person name="Kurland C.G."/>
        </authorList>
    </citation>
    <scope>NUCLEOTIDE SEQUENCE [LARGE SCALE GENOMIC DNA]</scope>
    <source>
        <strain>Madrid E</strain>
    </source>
</reference>
<reference key="2">
    <citation type="submission" date="1997-11" db="EMBL/GenBank/DDBJ databases">
        <title>Characterization of the subunits of the F1-ATP synthase gene of Rickettsia prowazekii.</title>
        <authorList>
            <person name="Beati L."/>
            <person name="Regnery R.L."/>
        </authorList>
    </citation>
    <scope>NUCLEOTIDE SEQUENCE [GENOMIC DNA] OF 1-272</scope>
    <source>
        <strain>F-12</strain>
    </source>
</reference>
<dbReference type="EC" id="7.1.2.2" evidence="1"/>
<dbReference type="EMBL" id="AJ235273">
    <property type="protein sequence ID" value="CAA15227.1"/>
    <property type="molecule type" value="Genomic_DNA"/>
</dbReference>
<dbReference type="EMBL" id="AF036246">
    <property type="protein sequence ID" value="AAB88553.1"/>
    <property type="molecule type" value="Genomic_DNA"/>
</dbReference>
<dbReference type="PIR" id="C71641">
    <property type="entry name" value="C71641"/>
</dbReference>
<dbReference type="RefSeq" id="NP_221151.1">
    <property type="nucleotide sequence ID" value="NC_000963.1"/>
</dbReference>
<dbReference type="RefSeq" id="WP_010886376.1">
    <property type="nucleotide sequence ID" value="NC_000963.1"/>
</dbReference>
<dbReference type="SMR" id="O50290"/>
<dbReference type="STRING" id="272947.gene:17555870"/>
<dbReference type="EnsemblBacteria" id="CAA15227">
    <property type="protein sequence ID" value="CAA15227"/>
    <property type="gene ID" value="CAA15227"/>
</dbReference>
<dbReference type="KEGG" id="rpr:RP801"/>
<dbReference type="PATRIC" id="fig|272947.5.peg.837"/>
<dbReference type="eggNOG" id="COG0055">
    <property type="taxonomic scope" value="Bacteria"/>
</dbReference>
<dbReference type="HOGENOM" id="CLU_022398_0_2_5"/>
<dbReference type="OrthoDB" id="9801639at2"/>
<dbReference type="Proteomes" id="UP000002480">
    <property type="component" value="Chromosome"/>
</dbReference>
<dbReference type="GO" id="GO:0005886">
    <property type="term" value="C:plasma membrane"/>
    <property type="evidence" value="ECO:0007669"/>
    <property type="project" value="UniProtKB-SubCell"/>
</dbReference>
<dbReference type="GO" id="GO:0045259">
    <property type="term" value="C:proton-transporting ATP synthase complex"/>
    <property type="evidence" value="ECO:0007669"/>
    <property type="project" value="UniProtKB-KW"/>
</dbReference>
<dbReference type="GO" id="GO:0005524">
    <property type="term" value="F:ATP binding"/>
    <property type="evidence" value="ECO:0007669"/>
    <property type="project" value="UniProtKB-UniRule"/>
</dbReference>
<dbReference type="GO" id="GO:0016887">
    <property type="term" value="F:ATP hydrolysis activity"/>
    <property type="evidence" value="ECO:0007669"/>
    <property type="project" value="InterPro"/>
</dbReference>
<dbReference type="GO" id="GO:0046933">
    <property type="term" value="F:proton-transporting ATP synthase activity, rotational mechanism"/>
    <property type="evidence" value="ECO:0007669"/>
    <property type="project" value="UniProtKB-UniRule"/>
</dbReference>
<dbReference type="CDD" id="cd18110">
    <property type="entry name" value="ATP-synt_F1_beta_C"/>
    <property type="match status" value="1"/>
</dbReference>
<dbReference type="CDD" id="cd18115">
    <property type="entry name" value="ATP-synt_F1_beta_N"/>
    <property type="match status" value="1"/>
</dbReference>
<dbReference type="CDD" id="cd01133">
    <property type="entry name" value="F1-ATPase_beta_CD"/>
    <property type="match status" value="1"/>
</dbReference>
<dbReference type="FunFam" id="1.10.1140.10:FF:000001">
    <property type="entry name" value="ATP synthase subunit beta"/>
    <property type="match status" value="1"/>
</dbReference>
<dbReference type="FunFam" id="2.40.10.170:FF:000014">
    <property type="entry name" value="ATP synthase subunit beta"/>
    <property type="match status" value="1"/>
</dbReference>
<dbReference type="FunFam" id="3.40.50.300:FF:000026">
    <property type="entry name" value="ATP synthase subunit beta"/>
    <property type="match status" value="1"/>
</dbReference>
<dbReference type="Gene3D" id="2.40.10.170">
    <property type="match status" value="1"/>
</dbReference>
<dbReference type="Gene3D" id="1.10.1140.10">
    <property type="entry name" value="Bovine Mitochondrial F1-atpase, Atp Synthase Beta Chain, Chain D, domain 3"/>
    <property type="match status" value="1"/>
</dbReference>
<dbReference type="Gene3D" id="3.40.50.300">
    <property type="entry name" value="P-loop containing nucleotide triphosphate hydrolases"/>
    <property type="match status" value="1"/>
</dbReference>
<dbReference type="HAMAP" id="MF_01347">
    <property type="entry name" value="ATP_synth_beta_bact"/>
    <property type="match status" value="1"/>
</dbReference>
<dbReference type="InterPro" id="IPR003593">
    <property type="entry name" value="AAA+_ATPase"/>
</dbReference>
<dbReference type="InterPro" id="IPR055190">
    <property type="entry name" value="ATP-synt_VA_C"/>
</dbReference>
<dbReference type="InterPro" id="IPR005722">
    <property type="entry name" value="ATP_synth_F1_bsu"/>
</dbReference>
<dbReference type="InterPro" id="IPR020003">
    <property type="entry name" value="ATPase_a/bsu_AS"/>
</dbReference>
<dbReference type="InterPro" id="IPR050053">
    <property type="entry name" value="ATPase_alpha/beta_chains"/>
</dbReference>
<dbReference type="InterPro" id="IPR004100">
    <property type="entry name" value="ATPase_F1/V1/A1_a/bsu_N"/>
</dbReference>
<dbReference type="InterPro" id="IPR036121">
    <property type="entry name" value="ATPase_F1/V1/A1_a/bsu_N_sf"/>
</dbReference>
<dbReference type="InterPro" id="IPR000194">
    <property type="entry name" value="ATPase_F1/V1/A1_a/bsu_nucl-bd"/>
</dbReference>
<dbReference type="InterPro" id="IPR024034">
    <property type="entry name" value="ATPase_F1/V1_b/a_C"/>
</dbReference>
<dbReference type="InterPro" id="IPR027417">
    <property type="entry name" value="P-loop_NTPase"/>
</dbReference>
<dbReference type="NCBIfam" id="TIGR01039">
    <property type="entry name" value="atpD"/>
    <property type="match status" value="1"/>
</dbReference>
<dbReference type="PANTHER" id="PTHR15184">
    <property type="entry name" value="ATP SYNTHASE"/>
    <property type="match status" value="1"/>
</dbReference>
<dbReference type="PANTHER" id="PTHR15184:SF71">
    <property type="entry name" value="ATP SYNTHASE SUBUNIT BETA, MITOCHONDRIAL"/>
    <property type="match status" value="1"/>
</dbReference>
<dbReference type="Pfam" id="PF00006">
    <property type="entry name" value="ATP-synt_ab"/>
    <property type="match status" value="1"/>
</dbReference>
<dbReference type="Pfam" id="PF02874">
    <property type="entry name" value="ATP-synt_ab_N"/>
    <property type="match status" value="1"/>
</dbReference>
<dbReference type="Pfam" id="PF22919">
    <property type="entry name" value="ATP-synt_VA_C"/>
    <property type="match status" value="1"/>
</dbReference>
<dbReference type="PIRSF" id="PIRSF039072">
    <property type="entry name" value="ATPase_subunit_beta"/>
    <property type="match status" value="1"/>
</dbReference>
<dbReference type="SMART" id="SM00382">
    <property type="entry name" value="AAA"/>
    <property type="match status" value="1"/>
</dbReference>
<dbReference type="SUPFAM" id="SSF47917">
    <property type="entry name" value="C-terminal domain of alpha and beta subunits of F1 ATP synthase"/>
    <property type="match status" value="1"/>
</dbReference>
<dbReference type="SUPFAM" id="SSF50615">
    <property type="entry name" value="N-terminal domain of alpha and beta subunits of F1 ATP synthase"/>
    <property type="match status" value="1"/>
</dbReference>
<dbReference type="SUPFAM" id="SSF52540">
    <property type="entry name" value="P-loop containing nucleoside triphosphate hydrolases"/>
    <property type="match status" value="1"/>
</dbReference>
<dbReference type="PROSITE" id="PS00152">
    <property type="entry name" value="ATPASE_ALPHA_BETA"/>
    <property type="match status" value="1"/>
</dbReference>
<sequence length="474" mass="51270">MTQNIGKITQVISAVVDVKFTNNGKLPEILNALECYNDKQRIVLEVAQHIGDDTVRCIAMDSTEGLIRGLEVIDTGNPIRIPVGTETLGRIMNVVGEPIDGKGEIKSATISSIYKPAPDFINQSTERDILVTGIKVVDLLAPYAKGGKIGLFGGAGVGKTVLIMELINNVAKAHGGYTVFAGVGERTREGNDLYHEMIASGVINLEEPEKSKVALVYGQMNEPPGARARVALSGLTIAESFRDMNAGQDVLFFVDNIFRFTQAGSEVSALLGRIPSAVGYQPTLATDMGELQERITSTKHGSITSVQAIYVPADDLTDPAPSTSFAHLDATTVLSRQIAELGIYPAVDPLDSNSQVLDPMIVGEKHYGVARQVQQVLQTYKSLQDIIAILGMDELSEEDKLTVSRARKIQRFLSQPFHVAEVFTGVEGKFVNLDDTIEGFKGLVEGQYDDLPEAAFYMVGTIDEAVEKAKILKI</sequence>
<name>ATPB_RICPR</name>
<feature type="chain" id="PRO_0000144466" description="ATP synthase subunit beta">
    <location>
        <begin position="1"/>
        <end position="474"/>
    </location>
</feature>
<feature type="binding site" evidence="1">
    <location>
        <begin position="153"/>
        <end position="160"/>
    </location>
    <ligand>
        <name>ATP</name>
        <dbReference type="ChEBI" id="CHEBI:30616"/>
    </ligand>
</feature>
<gene>
    <name evidence="1" type="primary">atpD</name>
    <name type="ordered locus">RP801</name>
</gene>
<organism>
    <name type="scientific">Rickettsia prowazekii (strain Madrid E)</name>
    <dbReference type="NCBI Taxonomy" id="272947"/>
    <lineage>
        <taxon>Bacteria</taxon>
        <taxon>Pseudomonadati</taxon>
        <taxon>Pseudomonadota</taxon>
        <taxon>Alphaproteobacteria</taxon>
        <taxon>Rickettsiales</taxon>
        <taxon>Rickettsiaceae</taxon>
        <taxon>Rickettsieae</taxon>
        <taxon>Rickettsia</taxon>
        <taxon>typhus group</taxon>
    </lineage>
</organism>
<keyword id="KW-0066">ATP synthesis</keyword>
<keyword id="KW-0067">ATP-binding</keyword>
<keyword id="KW-0997">Cell inner membrane</keyword>
<keyword id="KW-1003">Cell membrane</keyword>
<keyword id="KW-0139">CF(1)</keyword>
<keyword id="KW-0375">Hydrogen ion transport</keyword>
<keyword id="KW-0406">Ion transport</keyword>
<keyword id="KW-0472">Membrane</keyword>
<keyword id="KW-0547">Nucleotide-binding</keyword>
<keyword id="KW-1185">Reference proteome</keyword>
<keyword id="KW-1278">Translocase</keyword>
<keyword id="KW-0813">Transport</keyword>
<protein>
    <recommendedName>
        <fullName evidence="1">ATP synthase subunit beta</fullName>
        <ecNumber evidence="1">7.1.2.2</ecNumber>
    </recommendedName>
    <alternativeName>
        <fullName evidence="1">ATP synthase F1 sector subunit beta</fullName>
    </alternativeName>
    <alternativeName>
        <fullName evidence="1">F-ATPase subunit beta</fullName>
    </alternativeName>
</protein>